<organism>
    <name type="scientific">Bacillus subtilis (strain 168)</name>
    <dbReference type="NCBI Taxonomy" id="224308"/>
    <lineage>
        <taxon>Bacteria</taxon>
        <taxon>Bacillati</taxon>
        <taxon>Bacillota</taxon>
        <taxon>Bacilli</taxon>
        <taxon>Bacillales</taxon>
        <taxon>Bacillaceae</taxon>
        <taxon>Bacillus</taxon>
    </lineage>
</organism>
<keyword id="KW-0067">ATP-binding</keyword>
<keyword id="KW-0963">Cytoplasm</keyword>
<keyword id="KW-0235">DNA replication</keyword>
<keyword id="KW-0239">DNA-directed DNA polymerase</keyword>
<keyword id="KW-0479">Metal-binding</keyword>
<keyword id="KW-0547">Nucleotide-binding</keyword>
<keyword id="KW-0548">Nucleotidyltransferase</keyword>
<keyword id="KW-1185">Reference proteome</keyword>
<keyword id="KW-0808">Transferase</keyword>
<keyword id="KW-0862">Zinc</keyword>
<comment type="function">
    <text evidence="1">Part of the beta sliding clamp loading complex, which hydrolyzes ATP to load the beta clamp onto primed DNA to form the DNA replication pre-initiation complex. DNA polymerase III is a complex, multichain enzyme responsible for most of the replicative DNA synthesis in bacteria.</text>
</comment>
<comment type="catalytic activity">
    <reaction>
        <text>DNA(n) + a 2'-deoxyribonucleoside 5'-triphosphate = DNA(n+1) + diphosphate</text>
        <dbReference type="Rhea" id="RHEA:22508"/>
        <dbReference type="Rhea" id="RHEA-COMP:17339"/>
        <dbReference type="Rhea" id="RHEA-COMP:17340"/>
        <dbReference type="ChEBI" id="CHEBI:33019"/>
        <dbReference type="ChEBI" id="CHEBI:61560"/>
        <dbReference type="ChEBI" id="CHEBI:173112"/>
        <dbReference type="EC" id="2.7.7.7"/>
    </reaction>
</comment>
<comment type="subunit">
    <text evidence="1 3 4">Component of the DNA clamp loading complex consisting of tau(3):delta(1):delta'(1) (PubMed:23525462). The DNA polymerase III holoenzyme complex contains at least 10 different subunits organized into 3 functionally essential subassemblies: the Pol III core, the beta sliding clamp processivity factor and the clamp-loading complex. The Pol III core (subunits alpha, epsilon and theta) contains the polymerase and the 3'-5' exonuclease proofreading activities. The polymerase is tethered to the template via the dimeric beta sliding clamp processivity factor. The DNA clamp-loading complex assembles the beta sliding clamp onto the primed template and plays a central role in the organization and communication at the replication fork (By similarity). Forms a complex with replicative DNA helicase DnaB (shown with G.stearothermophilus DnaB) tau(3):DnaB(6); a single ATP hydrolysis even is sufficient for complex formation (PubMed:23525462). Colocalizes with DNA helicases PriA, RecQ and RecS (PubMed:17853894).</text>
</comment>
<comment type="interaction">
    <interactant intactId="EBI-5243974">
        <id>P09122</id>
    </interactant>
    <interactant intactId="EBI-6402993">
        <id>Q9X4C9</id>
        <label>dnaB</label>
    </interactant>
    <organismsDiffer>true</organismsDiffer>
    <experiments>2</experiments>
</comment>
<comment type="subcellular location">
    <subcellularLocation>
        <location evidence="3">Cytoplasm</location>
        <location evidence="3">Nucleoid</location>
    </subcellularLocation>
    <text evidence="3">Localizes in tight foci to the chromosomal replication center at mid-cell; positioning does not rely on the C-terminus of SSB (ssbA) (PubMed:17853894).</text>
</comment>
<comment type="miscellaneous">
    <text evidence="4">Unlike E.coli this gene does not also produce the shortened gamma protein; there is no defined order for DNA clamp loading complex assembly (PubMed:23525462).</text>
</comment>
<comment type="similarity">
    <text evidence="9">Belongs to the DnaX/STICHEL family.</text>
</comment>
<accession>P09122</accession>
<name>DPO3X_BACSU</name>
<gene>
    <name evidence="6 8" type="primary">dnaX</name>
    <name evidence="7" type="synonym">dnaH</name>
    <name evidence="5" type="synonym">dnaZX</name>
    <name type="ordered locus">BSU00190</name>
</gene>
<proteinExistence type="evidence at protein level"/>
<protein>
    <recommendedName>
        <fullName>DNA polymerase III subunit tau</fullName>
        <ecNumber>2.7.7.7</ecNumber>
    </recommendedName>
</protein>
<sequence length="563" mass="62763">MSYQALYRVFRPQRFEDVVGQEHITKTLQNALLQKKFSHAYLFSGPRGTGKTSAAKIFAKAVNCEHAPVDEPCNECAACKGITNGSISDVIEIDAASNNGVDEIRDIRDKVKFAPSAVTYKVYIIDEVHMLSIGAFNALLKTLEEPPEHCIFILATTEPHKIPLTIISRCQRFDFKRITSQAIVGRMNKIVDAEQLQVEEGSLEIIASAADGGMRDALSLLDQAISFSGDILKVEDALLITGAVSQLYIGKLAKSLHDKNVSDALETLNELLQQGKDPAKLIEDMIFYFRDMLLYKTAPGLEGVLEKVKVDETFRELSEQIPAQALYEMIDILNKSHQEMKWTNHPRIFFEVAVVKICQTSHQSAADLPEVDMLMKKIQQLEQEVERLKTTGIKAAAESPKKEAPRVPKGGKSNYKAPVGRIHEILKEATRPDLDLLRNSWGKLLAHLKQQNKVSHAALLNDSEPVAAGSAAFVLKFKYEIHCKMVAEDNNGVRTNLEQILESMLGKRMDLIGVPEAQWGKIREEFLEDHQQENEGSNEPAEEDPLIAEAKKLVGADLIEIKD</sequence>
<dbReference type="EC" id="2.7.7.7"/>
<dbReference type="EMBL" id="X17014">
    <property type="protein sequence ID" value="CAA34877.1"/>
    <property type="molecule type" value="Genomic_DNA"/>
</dbReference>
<dbReference type="EMBL" id="D26185">
    <property type="protein sequence ID" value="BAA05255.1"/>
    <property type="molecule type" value="Genomic_DNA"/>
</dbReference>
<dbReference type="EMBL" id="AL009126">
    <property type="protein sequence ID" value="CAB11795.2"/>
    <property type="molecule type" value="Genomic_DNA"/>
</dbReference>
<dbReference type="EMBL" id="X06803">
    <property type="protein sequence ID" value="CAA29958.1"/>
    <property type="molecule type" value="Genomic_DNA"/>
</dbReference>
<dbReference type="EMBL" id="X52144">
    <property type="protein sequence ID" value="CAA36390.1"/>
    <property type="molecule type" value="Genomic_DNA"/>
</dbReference>
<dbReference type="PIR" id="I40469">
    <property type="entry name" value="I40469"/>
</dbReference>
<dbReference type="PIR" id="S13786">
    <property type="entry name" value="S13786"/>
</dbReference>
<dbReference type="RefSeq" id="NP_387900.2">
    <property type="nucleotide sequence ID" value="NC_000964.3"/>
</dbReference>
<dbReference type="RefSeq" id="WP_003247135.1">
    <property type="nucleotide sequence ID" value="NZ_OZ025638.1"/>
</dbReference>
<dbReference type="SMR" id="P09122"/>
<dbReference type="FunCoup" id="P09122">
    <property type="interactions" value="313"/>
</dbReference>
<dbReference type="IntAct" id="P09122">
    <property type="interactions" value="6"/>
</dbReference>
<dbReference type="STRING" id="224308.BSU00190"/>
<dbReference type="PaxDb" id="224308-BSU00190"/>
<dbReference type="EnsemblBacteria" id="CAB11795">
    <property type="protein sequence ID" value="CAB11795"/>
    <property type="gene ID" value="BSU_00190"/>
</dbReference>
<dbReference type="GeneID" id="936899"/>
<dbReference type="KEGG" id="bsu:BSU00190"/>
<dbReference type="PATRIC" id="fig|224308.179.peg.19"/>
<dbReference type="eggNOG" id="COG2812">
    <property type="taxonomic scope" value="Bacteria"/>
</dbReference>
<dbReference type="InParanoid" id="P09122"/>
<dbReference type="OrthoDB" id="9810148at2"/>
<dbReference type="PhylomeDB" id="P09122"/>
<dbReference type="BioCyc" id="BSUB:BSU00190-MONOMER"/>
<dbReference type="Proteomes" id="UP000001570">
    <property type="component" value="Chromosome"/>
</dbReference>
<dbReference type="GO" id="GO:0005737">
    <property type="term" value="C:cytoplasm"/>
    <property type="evidence" value="ECO:0007669"/>
    <property type="project" value="UniProtKB-KW"/>
</dbReference>
<dbReference type="GO" id="GO:0009360">
    <property type="term" value="C:DNA polymerase III complex"/>
    <property type="evidence" value="ECO:0007669"/>
    <property type="project" value="InterPro"/>
</dbReference>
<dbReference type="GO" id="GO:0009295">
    <property type="term" value="C:nucleoid"/>
    <property type="evidence" value="ECO:0007669"/>
    <property type="project" value="UniProtKB-SubCell"/>
</dbReference>
<dbReference type="GO" id="GO:0005524">
    <property type="term" value="F:ATP binding"/>
    <property type="evidence" value="ECO:0007669"/>
    <property type="project" value="UniProtKB-KW"/>
</dbReference>
<dbReference type="GO" id="GO:0016887">
    <property type="term" value="F:ATP hydrolysis activity"/>
    <property type="evidence" value="ECO:0007669"/>
    <property type="project" value="InterPro"/>
</dbReference>
<dbReference type="GO" id="GO:0003677">
    <property type="term" value="F:DNA binding"/>
    <property type="evidence" value="ECO:0007669"/>
    <property type="project" value="InterPro"/>
</dbReference>
<dbReference type="GO" id="GO:0003887">
    <property type="term" value="F:DNA-directed DNA polymerase activity"/>
    <property type="evidence" value="ECO:0007669"/>
    <property type="project" value="UniProtKB-KW"/>
</dbReference>
<dbReference type="GO" id="GO:0046872">
    <property type="term" value="F:metal ion binding"/>
    <property type="evidence" value="ECO:0007669"/>
    <property type="project" value="UniProtKB-KW"/>
</dbReference>
<dbReference type="GO" id="GO:0006261">
    <property type="term" value="P:DNA-templated DNA replication"/>
    <property type="evidence" value="ECO:0000318"/>
    <property type="project" value="GO_Central"/>
</dbReference>
<dbReference type="CDD" id="cd00009">
    <property type="entry name" value="AAA"/>
    <property type="match status" value="1"/>
</dbReference>
<dbReference type="CDD" id="cd18137">
    <property type="entry name" value="HLD_clamp_pol_III_gamma_tau"/>
    <property type="match status" value="1"/>
</dbReference>
<dbReference type="FunFam" id="1.10.8.60:FF:000013">
    <property type="entry name" value="DNA polymerase III subunit gamma/tau"/>
    <property type="match status" value="1"/>
</dbReference>
<dbReference type="FunFam" id="1.20.272.10:FF:000003">
    <property type="entry name" value="DNA polymerase III subunit gamma/tau"/>
    <property type="match status" value="1"/>
</dbReference>
<dbReference type="FunFam" id="3.40.50.300:FF:000014">
    <property type="entry name" value="DNA polymerase III subunit gamma/tau"/>
    <property type="match status" value="1"/>
</dbReference>
<dbReference type="Gene3D" id="1.10.8.60">
    <property type="match status" value="1"/>
</dbReference>
<dbReference type="Gene3D" id="1.20.272.10">
    <property type="match status" value="1"/>
</dbReference>
<dbReference type="Gene3D" id="3.40.50.300">
    <property type="entry name" value="P-loop containing nucleotide triphosphate hydrolases"/>
    <property type="match status" value="1"/>
</dbReference>
<dbReference type="InterPro" id="IPR003593">
    <property type="entry name" value="AAA+_ATPase"/>
</dbReference>
<dbReference type="InterPro" id="IPR001270">
    <property type="entry name" value="ClpA/B"/>
</dbReference>
<dbReference type="InterPro" id="IPR008921">
    <property type="entry name" value="DNA_pol3_clamp-load_cplx_C"/>
</dbReference>
<dbReference type="InterPro" id="IPR022754">
    <property type="entry name" value="DNA_pol_III_gamma-3"/>
</dbReference>
<dbReference type="InterPro" id="IPR012763">
    <property type="entry name" value="DNA_pol_III_sug/sutau_N"/>
</dbReference>
<dbReference type="InterPro" id="IPR050238">
    <property type="entry name" value="DNA_Rep/Repair_Clamp_Loader"/>
</dbReference>
<dbReference type="InterPro" id="IPR045085">
    <property type="entry name" value="HLD_clamp_pol_III_gamma_tau"/>
</dbReference>
<dbReference type="InterPro" id="IPR027417">
    <property type="entry name" value="P-loop_NTPase"/>
</dbReference>
<dbReference type="NCBIfam" id="TIGR02397">
    <property type="entry name" value="dnaX_nterm"/>
    <property type="match status" value="1"/>
</dbReference>
<dbReference type="NCBIfam" id="NF004046">
    <property type="entry name" value="PRK05563.1"/>
    <property type="match status" value="1"/>
</dbReference>
<dbReference type="PANTHER" id="PTHR11669:SF0">
    <property type="entry name" value="PROTEIN STICHEL-LIKE 2"/>
    <property type="match status" value="1"/>
</dbReference>
<dbReference type="PANTHER" id="PTHR11669">
    <property type="entry name" value="REPLICATION FACTOR C / DNA POLYMERASE III GAMMA-TAU SUBUNIT"/>
    <property type="match status" value="1"/>
</dbReference>
<dbReference type="Pfam" id="PF13177">
    <property type="entry name" value="DNA_pol3_delta2"/>
    <property type="match status" value="1"/>
</dbReference>
<dbReference type="Pfam" id="PF12169">
    <property type="entry name" value="DNA_pol3_gamma3"/>
    <property type="match status" value="1"/>
</dbReference>
<dbReference type="Pfam" id="PF22608">
    <property type="entry name" value="DNAX_ATPase_lid"/>
    <property type="match status" value="1"/>
</dbReference>
<dbReference type="PRINTS" id="PR00300">
    <property type="entry name" value="CLPPROTEASEA"/>
</dbReference>
<dbReference type="SMART" id="SM00382">
    <property type="entry name" value="AAA"/>
    <property type="match status" value="1"/>
</dbReference>
<dbReference type="SUPFAM" id="SSF52540">
    <property type="entry name" value="P-loop containing nucleoside triphosphate hydrolases"/>
    <property type="match status" value="1"/>
</dbReference>
<dbReference type="SUPFAM" id="SSF48019">
    <property type="entry name" value="post-AAA+ oligomerization domain-like"/>
    <property type="match status" value="1"/>
</dbReference>
<reference key="1">
    <citation type="journal article" date="1990" name="Nucleic Acids Res.">
        <title>Molecular cloning, genetic characterization and DNA sequence analysis of the recM region of Bacillus subtilis.</title>
        <authorList>
            <person name="Alonso J.C."/>
            <person name="Shirahige K."/>
            <person name="Ogasawara N."/>
        </authorList>
    </citation>
    <scope>NUCLEOTIDE SEQUENCE [GENOMIC DNA]</scope>
    <source>
        <strain>168 / YB886 / BG214</strain>
    </source>
</reference>
<reference key="2">
    <citation type="journal article" date="1994" name="DNA Res.">
        <title>Systematic sequencing of the 180 kilobase region of the Bacillus subtilis chromosome containing the replication origin.</title>
        <authorList>
            <person name="Ogasawara N."/>
            <person name="Nakai S."/>
            <person name="Yoshikawa H."/>
        </authorList>
    </citation>
    <scope>NUCLEOTIDE SEQUENCE [GENOMIC DNA]</scope>
    <source>
        <strain>168</strain>
    </source>
</reference>
<reference key="3">
    <citation type="journal article" date="1997" name="Nature">
        <title>The complete genome sequence of the Gram-positive bacterium Bacillus subtilis.</title>
        <authorList>
            <person name="Kunst F."/>
            <person name="Ogasawara N."/>
            <person name="Moszer I."/>
            <person name="Albertini A.M."/>
            <person name="Alloni G."/>
            <person name="Azevedo V."/>
            <person name="Bertero M.G."/>
            <person name="Bessieres P."/>
            <person name="Bolotin A."/>
            <person name="Borchert S."/>
            <person name="Borriss R."/>
            <person name="Boursier L."/>
            <person name="Brans A."/>
            <person name="Braun M."/>
            <person name="Brignell S.C."/>
            <person name="Bron S."/>
            <person name="Brouillet S."/>
            <person name="Bruschi C.V."/>
            <person name="Caldwell B."/>
            <person name="Capuano V."/>
            <person name="Carter N.M."/>
            <person name="Choi S.-K."/>
            <person name="Codani J.-J."/>
            <person name="Connerton I.F."/>
            <person name="Cummings N.J."/>
            <person name="Daniel R.A."/>
            <person name="Denizot F."/>
            <person name="Devine K.M."/>
            <person name="Duesterhoeft A."/>
            <person name="Ehrlich S.D."/>
            <person name="Emmerson P.T."/>
            <person name="Entian K.-D."/>
            <person name="Errington J."/>
            <person name="Fabret C."/>
            <person name="Ferrari E."/>
            <person name="Foulger D."/>
            <person name="Fritz C."/>
            <person name="Fujita M."/>
            <person name="Fujita Y."/>
            <person name="Fuma S."/>
            <person name="Galizzi A."/>
            <person name="Galleron N."/>
            <person name="Ghim S.-Y."/>
            <person name="Glaser P."/>
            <person name="Goffeau A."/>
            <person name="Golightly E.J."/>
            <person name="Grandi G."/>
            <person name="Guiseppi G."/>
            <person name="Guy B.J."/>
            <person name="Haga K."/>
            <person name="Haiech J."/>
            <person name="Harwood C.R."/>
            <person name="Henaut A."/>
            <person name="Hilbert H."/>
            <person name="Holsappel S."/>
            <person name="Hosono S."/>
            <person name="Hullo M.-F."/>
            <person name="Itaya M."/>
            <person name="Jones L.-M."/>
            <person name="Joris B."/>
            <person name="Karamata D."/>
            <person name="Kasahara Y."/>
            <person name="Klaerr-Blanchard M."/>
            <person name="Klein C."/>
            <person name="Kobayashi Y."/>
            <person name="Koetter P."/>
            <person name="Koningstein G."/>
            <person name="Krogh S."/>
            <person name="Kumano M."/>
            <person name="Kurita K."/>
            <person name="Lapidus A."/>
            <person name="Lardinois S."/>
            <person name="Lauber J."/>
            <person name="Lazarevic V."/>
            <person name="Lee S.-M."/>
            <person name="Levine A."/>
            <person name="Liu H."/>
            <person name="Masuda S."/>
            <person name="Mauel C."/>
            <person name="Medigue C."/>
            <person name="Medina N."/>
            <person name="Mellado R.P."/>
            <person name="Mizuno M."/>
            <person name="Moestl D."/>
            <person name="Nakai S."/>
            <person name="Noback M."/>
            <person name="Noone D."/>
            <person name="O'Reilly M."/>
            <person name="Ogawa K."/>
            <person name="Ogiwara A."/>
            <person name="Oudega B."/>
            <person name="Park S.-H."/>
            <person name="Parro V."/>
            <person name="Pohl T.M."/>
            <person name="Portetelle D."/>
            <person name="Porwollik S."/>
            <person name="Prescott A.M."/>
            <person name="Presecan E."/>
            <person name="Pujic P."/>
            <person name="Purnelle B."/>
            <person name="Rapoport G."/>
            <person name="Rey M."/>
            <person name="Reynolds S."/>
            <person name="Rieger M."/>
            <person name="Rivolta C."/>
            <person name="Rocha E."/>
            <person name="Roche B."/>
            <person name="Rose M."/>
            <person name="Sadaie Y."/>
            <person name="Sato T."/>
            <person name="Scanlan E."/>
            <person name="Schleich S."/>
            <person name="Schroeter R."/>
            <person name="Scoffone F."/>
            <person name="Sekiguchi J."/>
            <person name="Sekowska A."/>
            <person name="Seror S.J."/>
            <person name="Serror P."/>
            <person name="Shin B.-S."/>
            <person name="Soldo B."/>
            <person name="Sorokin A."/>
            <person name="Tacconi E."/>
            <person name="Takagi T."/>
            <person name="Takahashi H."/>
            <person name="Takemaru K."/>
            <person name="Takeuchi M."/>
            <person name="Tamakoshi A."/>
            <person name="Tanaka T."/>
            <person name="Terpstra P."/>
            <person name="Tognoni A."/>
            <person name="Tosato V."/>
            <person name="Uchiyama S."/>
            <person name="Vandenbol M."/>
            <person name="Vannier F."/>
            <person name="Vassarotti A."/>
            <person name="Viari A."/>
            <person name="Wambutt R."/>
            <person name="Wedler E."/>
            <person name="Wedler H."/>
            <person name="Weitzenegger T."/>
            <person name="Winters P."/>
            <person name="Wipat A."/>
            <person name="Yamamoto H."/>
            <person name="Yamane K."/>
            <person name="Yasumoto K."/>
            <person name="Yata K."/>
            <person name="Yoshida K."/>
            <person name="Yoshikawa H.-F."/>
            <person name="Zumstein E."/>
            <person name="Yoshikawa H."/>
            <person name="Danchin A."/>
        </authorList>
    </citation>
    <scope>NUCLEOTIDE SEQUENCE [LARGE SCALE GENOMIC DNA]</scope>
    <source>
        <strain>168</strain>
    </source>
</reference>
<reference key="4">
    <citation type="journal article" date="2009" name="Microbiology">
        <title>From a consortium sequence to a unified sequence: the Bacillus subtilis 168 reference genome a decade later.</title>
        <authorList>
            <person name="Barbe V."/>
            <person name="Cruveiller S."/>
            <person name="Kunst F."/>
            <person name="Lenoble P."/>
            <person name="Meurice G."/>
            <person name="Sekowska A."/>
            <person name="Vallenet D."/>
            <person name="Wang T."/>
            <person name="Moszer I."/>
            <person name="Medigue C."/>
            <person name="Danchin A."/>
        </authorList>
    </citation>
    <scope>SEQUENCE REVISION TO 211 AND 533</scope>
</reference>
<reference key="5">
    <citation type="journal article" date="1988" name="Nucleic Acids Res.">
        <title>A dnaZX-like open reading frame downstream from the Bacillus subtilis scRNA gene.</title>
        <authorList>
            <person name="Struck J.C.R."/>
            <person name="Vogel D.W."/>
            <person name="Ulbrich N."/>
            <person name="Erdmann V.A."/>
        </authorList>
    </citation>
    <scope>NUCLEOTIDE SEQUENCE [GENOMIC DNA] OF 1-422</scope>
    <source>
        <strain>168</strain>
    </source>
</reference>
<reference key="6">
    <citation type="journal article" date="1989" name="Mol. Gen. Genet.">
        <title>Transcription and processing of Bacillus subtilis small cytoplasmic RNA.</title>
        <authorList>
            <person name="Struck J.C.R."/>
            <person name="Hartmann R.K."/>
            <person name="Toschka H.Y."/>
            <person name="Erdmann V.A."/>
        </authorList>
    </citation>
    <scope>NUCLEOTIDE SEQUENCE [GENOMIC DNA] OF 1-5</scope>
    <source>
        <strain>168</strain>
    </source>
</reference>
<reference key="7">
    <citation type="journal article" date="1990" name="Biochim. Biophys. Acta">
        <title>Characterization of a 17 kDa protein gene upstream from the small cytoplasmic RNA gene of Bacillus subtilis.</title>
        <authorList>
            <person name="Struck J.C.R."/>
            <person name="Kretschmer-Kazemi F.R."/>
            <person name="Schroeder W."/>
            <person name="Hucho F."/>
            <person name="Toschka H.Y."/>
            <person name="Erdmann V.A."/>
        </authorList>
    </citation>
    <scope>NUCLEOTIDE SEQUENCE [GENOMIC DNA] OF 1-5</scope>
    <source>
        <strain>168</strain>
    </source>
</reference>
<reference key="8">
    <citation type="journal article" date="2007" name="EMBO J.">
        <title>Anticipating chromosomal replication fork arrest: SSB targets repair DNA helicases to active forks.</title>
        <authorList>
            <person name="Lecointe F."/>
            <person name="Serena C."/>
            <person name="Velten M."/>
            <person name="Costes A."/>
            <person name="McGovern S."/>
            <person name="Meile J.C."/>
            <person name="Errington J."/>
            <person name="Ehrlich S.D."/>
            <person name="Noirot P."/>
            <person name="Polard P."/>
        </authorList>
    </citation>
    <scope>SUBCELLULAR LOCATION</scope>
    <source>
        <strain>168</strain>
    </source>
</reference>
<reference key="9">
    <citation type="journal article" date="2013" name="Nucleic Acids Res.">
        <title>Insights into the structure and assembly of the Bacillus subtilis clamp-loader complex and its interaction with the replicative helicase.</title>
        <authorList>
            <person name="Afonso J.P."/>
            <person name="Chintakayala K."/>
            <person name="Suwannachart C."/>
            <person name="Sedelnikova S."/>
            <person name="Giles K."/>
            <person name="Hoyes J.B."/>
            <person name="Soultanas P."/>
            <person name="Rafferty J.B."/>
            <person name="Oldham N.J."/>
        </authorList>
    </citation>
    <scope>SUBUNIT</scope>
</reference>
<feature type="chain" id="PRO_0000105492" description="DNA polymerase III subunit tau">
    <location>
        <begin position="1"/>
        <end position="563"/>
    </location>
</feature>
<feature type="binding site" evidence="2">
    <location>
        <begin position="45"/>
        <end position="52"/>
    </location>
    <ligand>
        <name>ATP</name>
        <dbReference type="ChEBI" id="CHEBI:30616"/>
    </ligand>
</feature>
<feature type="binding site" evidence="1">
    <location>
        <position position="64"/>
    </location>
    <ligand>
        <name>Zn(2+)</name>
        <dbReference type="ChEBI" id="CHEBI:29105"/>
    </ligand>
</feature>
<feature type="binding site" evidence="1">
    <location>
        <position position="73"/>
    </location>
    <ligand>
        <name>Zn(2+)</name>
        <dbReference type="ChEBI" id="CHEBI:29105"/>
    </ligand>
</feature>
<feature type="binding site" evidence="1">
    <location>
        <position position="76"/>
    </location>
    <ligand>
        <name>Zn(2+)</name>
        <dbReference type="ChEBI" id="CHEBI:29105"/>
    </ligand>
</feature>
<feature type="binding site" evidence="1">
    <location>
        <position position="79"/>
    </location>
    <ligand>
        <name>Zn(2+)</name>
        <dbReference type="ChEBI" id="CHEBI:29105"/>
    </ligand>
</feature>
<feature type="sequence conflict" description="In Ref. 1; CAA34877 and 2; BAA05255." evidence="9" ref="1 2">
    <original>E</original>
    <variation>A</variation>
    <location>
        <position position="533"/>
    </location>
</feature>
<evidence type="ECO:0000250" key="1">
    <source>
        <dbReference type="UniProtKB" id="P06710"/>
    </source>
</evidence>
<evidence type="ECO:0000255" key="2"/>
<evidence type="ECO:0000269" key="3">
    <source>
    </source>
</evidence>
<evidence type="ECO:0000269" key="4">
    <source>
    </source>
</evidence>
<evidence type="ECO:0000303" key="5">
    <source>
    </source>
</evidence>
<evidence type="ECO:0000303" key="6">
    <source>
    </source>
</evidence>
<evidence type="ECO:0000303" key="7">
    <source>
    </source>
</evidence>
<evidence type="ECO:0000303" key="8">
    <source>
    </source>
</evidence>
<evidence type="ECO:0000305" key="9"/>